<organism>
    <name type="scientific">Arabidopsis thaliana</name>
    <name type="common">Mouse-ear cress</name>
    <dbReference type="NCBI Taxonomy" id="3702"/>
    <lineage>
        <taxon>Eukaryota</taxon>
        <taxon>Viridiplantae</taxon>
        <taxon>Streptophyta</taxon>
        <taxon>Embryophyta</taxon>
        <taxon>Tracheophyta</taxon>
        <taxon>Spermatophyta</taxon>
        <taxon>Magnoliopsida</taxon>
        <taxon>eudicotyledons</taxon>
        <taxon>Gunneridae</taxon>
        <taxon>Pentapetalae</taxon>
        <taxon>rosids</taxon>
        <taxon>malvids</taxon>
        <taxon>Brassicales</taxon>
        <taxon>Brassicaceae</taxon>
        <taxon>Camelineae</taxon>
        <taxon>Arabidopsis</taxon>
    </lineage>
</organism>
<protein>
    <recommendedName>
        <fullName>Putative CCR4-associated factor 1 homolog 3</fullName>
        <ecNumber>3.1.13.4</ecNumber>
    </recommendedName>
</protein>
<accession>Q9SFX6</accession>
<gene>
    <name type="primary">CAF1-3</name>
    <name type="ordered locus">At1g27820</name>
    <name type="ORF">F28L5.3</name>
    <name type="ORF">T22C5.28</name>
</gene>
<evidence type="ECO:0000250" key="1"/>
<evidence type="ECO:0000305" key="2"/>
<keyword id="KW-0963">Cytoplasm</keyword>
<keyword id="KW-0269">Exonuclease</keyword>
<keyword id="KW-0378">Hydrolase</keyword>
<keyword id="KW-0479">Metal-binding</keyword>
<keyword id="KW-0540">Nuclease</keyword>
<keyword id="KW-0539">Nucleus</keyword>
<keyword id="KW-1185">Reference proteome</keyword>
<keyword id="KW-0694">RNA-binding</keyword>
<keyword id="KW-0804">Transcription</keyword>
<keyword id="KW-0805">Transcription regulation</keyword>
<proteinExistence type="inferred from homology"/>
<reference key="1">
    <citation type="journal article" date="2000" name="Nature">
        <title>Sequence and analysis of chromosome 1 of the plant Arabidopsis thaliana.</title>
        <authorList>
            <person name="Theologis A."/>
            <person name="Ecker J.R."/>
            <person name="Palm C.J."/>
            <person name="Federspiel N.A."/>
            <person name="Kaul S."/>
            <person name="White O."/>
            <person name="Alonso J."/>
            <person name="Altafi H."/>
            <person name="Araujo R."/>
            <person name="Bowman C.L."/>
            <person name="Brooks S.Y."/>
            <person name="Buehler E."/>
            <person name="Chan A."/>
            <person name="Chao Q."/>
            <person name="Chen H."/>
            <person name="Cheuk R.F."/>
            <person name="Chin C.W."/>
            <person name="Chung M.K."/>
            <person name="Conn L."/>
            <person name="Conway A.B."/>
            <person name="Conway A.R."/>
            <person name="Creasy T.H."/>
            <person name="Dewar K."/>
            <person name="Dunn P."/>
            <person name="Etgu P."/>
            <person name="Feldblyum T.V."/>
            <person name="Feng J.-D."/>
            <person name="Fong B."/>
            <person name="Fujii C.Y."/>
            <person name="Gill J.E."/>
            <person name="Goldsmith A.D."/>
            <person name="Haas B."/>
            <person name="Hansen N.F."/>
            <person name="Hughes B."/>
            <person name="Huizar L."/>
            <person name="Hunter J.L."/>
            <person name="Jenkins J."/>
            <person name="Johnson-Hopson C."/>
            <person name="Khan S."/>
            <person name="Khaykin E."/>
            <person name="Kim C.J."/>
            <person name="Koo H.L."/>
            <person name="Kremenetskaia I."/>
            <person name="Kurtz D.B."/>
            <person name="Kwan A."/>
            <person name="Lam B."/>
            <person name="Langin-Hooper S."/>
            <person name="Lee A."/>
            <person name="Lee J.M."/>
            <person name="Lenz C.A."/>
            <person name="Li J.H."/>
            <person name="Li Y.-P."/>
            <person name="Lin X."/>
            <person name="Liu S.X."/>
            <person name="Liu Z.A."/>
            <person name="Luros J.S."/>
            <person name="Maiti R."/>
            <person name="Marziali A."/>
            <person name="Militscher J."/>
            <person name="Miranda M."/>
            <person name="Nguyen M."/>
            <person name="Nierman W.C."/>
            <person name="Osborne B.I."/>
            <person name="Pai G."/>
            <person name="Peterson J."/>
            <person name="Pham P.K."/>
            <person name="Rizzo M."/>
            <person name="Rooney T."/>
            <person name="Rowley D."/>
            <person name="Sakano H."/>
            <person name="Salzberg S.L."/>
            <person name="Schwartz J.R."/>
            <person name="Shinn P."/>
            <person name="Southwick A.M."/>
            <person name="Sun H."/>
            <person name="Tallon L.J."/>
            <person name="Tambunga G."/>
            <person name="Toriumi M.J."/>
            <person name="Town C.D."/>
            <person name="Utterback T."/>
            <person name="Van Aken S."/>
            <person name="Vaysberg M."/>
            <person name="Vysotskaia V.S."/>
            <person name="Walker M."/>
            <person name="Wu D."/>
            <person name="Yu G."/>
            <person name="Fraser C.M."/>
            <person name="Venter J.C."/>
            <person name="Davis R.W."/>
        </authorList>
    </citation>
    <scope>NUCLEOTIDE SEQUENCE [LARGE SCALE GENOMIC DNA]</scope>
    <source>
        <strain>cv. Columbia</strain>
    </source>
</reference>
<reference key="2">
    <citation type="journal article" date="2017" name="Plant J.">
        <title>Araport11: a complete reannotation of the Arabidopsis thaliana reference genome.</title>
        <authorList>
            <person name="Cheng C.Y."/>
            <person name="Krishnakumar V."/>
            <person name="Chan A.P."/>
            <person name="Thibaud-Nissen F."/>
            <person name="Schobel S."/>
            <person name="Town C.D."/>
        </authorList>
    </citation>
    <scope>GENOME REANNOTATION</scope>
    <source>
        <strain>cv. Columbia</strain>
    </source>
</reference>
<dbReference type="EC" id="3.1.13.4"/>
<dbReference type="EMBL" id="AC012375">
    <property type="protein sequence ID" value="AAF24955.1"/>
    <property type="molecule type" value="Genomic_DNA"/>
</dbReference>
<dbReference type="EMBL" id="AC079280">
    <property type="protein sequence ID" value="AAG50574.1"/>
    <property type="molecule type" value="Genomic_DNA"/>
</dbReference>
<dbReference type="EMBL" id="CP002684">
    <property type="protein sequence ID" value="AEE30880.1"/>
    <property type="molecule type" value="Genomic_DNA"/>
</dbReference>
<dbReference type="PIR" id="C86403">
    <property type="entry name" value="C86403"/>
</dbReference>
<dbReference type="RefSeq" id="NP_174103.1">
    <property type="nucleotide sequence ID" value="NM_102547.1"/>
</dbReference>
<dbReference type="SMR" id="Q9SFX6"/>
<dbReference type="FunCoup" id="Q9SFX6">
    <property type="interactions" value="112"/>
</dbReference>
<dbReference type="STRING" id="3702.Q9SFX6"/>
<dbReference type="iPTMnet" id="Q9SFX6"/>
<dbReference type="PaxDb" id="3702-AT1G27820.1"/>
<dbReference type="DNASU" id="839676"/>
<dbReference type="EnsemblPlants" id="AT1G27820.1">
    <property type="protein sequence ID" value="AT1G27820.1"/>
    <property type="gene ID" value="AT1G27820"/>
</dbReference>
<dbReference type="GeneID" id="839676"/>
<dbReference type="Gramene" id="AT1G27820.1">
    <property type="protein sequence ID" value="AT1G27820.1"/>
    <property type="gene ID" value="AT1G27820"/>
</dbReference>
<dbReference type="KEGG" id="ath:AT1G27820"/>
<dbReference type="Araport" id="AT1G27820"/>
<dbReference type="TAIR" id="AT1G27820">
    <property type="gene designation" value="CAF1C"/>
</dbReference>
<dbReference type="eggNOG" id="KOG0304">
    <property type="taxonomic scope" value="Eukaryota"/>
</dbReference>
<dbReference type="HOGENOM" id="CLU_027974_1_3_1"/>
<dbReference type="InParanoid" id="Q9SFX6"/>
<dbReference type="OMA" id="VEMNSIR"/>
<dbReference type="PhylomeDB" id="Q9SFX6"/>
<dbReference type="PRO" id="PR:Q9SFX6"/>
<dbReference type="Proteomes" id="UP000006548">
    <property type="component" value="Chromosome 1"/>
</dbReference>
<dbReference type="ExpressionAtlas" id="Q9SFX6">
    <property type="expression patterns" value="baseline and differential"/>
</dbReference>
<dbReference type="GO" id="GO:0030014">
    <property type="term" value="C:CCR4-NOT complex"/>
    <property type="evidence" value="ECO:0007669"/>
    <property type="project" value="InterPro"/>
</dbReference>
<dbReference type="GO" id="GO:0005737">
    <property type="term" value="C:cytoplasm"/>
    <property type="evidence" value="ECO:0007669"/>
    <property type="project" value="UniProtKB-SubCell"/>
</dbReference>
<dbReference type="GO" id="GO:0005634">
    <property type="term" value="C:nucleus"/>
    <property type="evidence" value="ECO:0007669"/>
    <property type="project" value="UniProtKB-SubCell"/>
</dbReference>
<dbReference type="GO" id="GO:0046872">
    <property type="term" value="F:metal ion binding"/>
    <property type="evidence" value="ECO:0007669"/>
    <property type="project" value="UniProtKB-KW"/>
</dbReference>
<dbReference type="GO" id="GO:0004535">
    <property type="term" value="F:poly(A)-specific ribonuclease activity"/>
    <property type="evidence" value="ECO:0007669"/>
    <property type="project" value="UniProtKB-EC"/>
</dbReference>
<dbReference type="GO" id="GO:0003723">
    <property type="term" value="F:RNA binding"/>
    <property type="evidence" value="ECO:0007669"/>
    <property type="project" value="UniProtKB-KW"/>
</dbReference>
<dbReference type="FunFam" id="3.30.420.10:FF:000223">
    <property type="entry name" value="Probable CCR4-associated factor 1 homolog 5"/>
    <property type="match status" value="1"/>
</dbReference>
<dbReference type="Gene3D" id="3.30.420.10">
    <property type="entry name" value="Ribonuclease H-like superfamily/Ribonuclease H"/>
    <property type="match status" value="1"/>
</dbReference>
<dbReference type="InterPro" id="IPR039637">
    <property type="entry name" value="CNOT7/CNOT8/Pop2"/>
</dbReference>
<dbReference type="InterPro" id="IPR006941">
    <property type="entry name" value="RNase_CAF1"/>
</dbReference>
<dbReference type="InterPro" id="IPR012337">
    <property type="entry name" value="RNaseH-like_sf"/>
</dbReference>
<dbReference type="InterPro" id="IPR036397">
    <property type="entry name" value="RNaseH_sf"/>
</dbReference>
<dbReference type="PANTHER" id="PTHR10797">
    <property type="entry name" value="CCR4-NOT TRANSCRIPTION COMPLEX SUBUNIT"/>
    <property type="match status" value="1"/>
</dbReference>
<dbReference type="Pfam" id="PF04857">
    <property type="entry name" value="CAF1"/>
    <property type="match status" value="1"/>
</dbReference>
<dbReference type="SUPFAM" id="SSF53098">
    <property type="entry name" value="Ribonuclease H-like"/>
    <property type="match status" value="1"/>
</dbReference>
<name>CAF1C_ARATH</name>
<comment type="function">
    <text evidence="1">Ubiquitous transcription factor required for a diverse set of processes. It is a component of the CCR4 complex involved in the control of gene expression (By similarity).</text>
</comment>
<comment type="catalytic activity">
    <reaction>
        <text>Exonucleolytic cleavage of poly(A) to 5'-AMP.</text>
        <dbReference type="EC" id="3.1.13.4"/>
    </reaction>
</comment>
<comment type="cofactor">
    <cofactor evidence="1">
        <name>a divalent metal cation</name>
        <dbReference type="ChEBI" id="CHEBI:60240"/>
    </cofactor>
</comment>
<comment type="subunit">
    <text evidence="1">Component of the CCR4-NOT complex, at least composed of CRR4 and CAF1 proteins.</text>
</comment>
<comment type="subcellular location">
    <subcellularLocation>
        <location evidence="1">Nucleus</location>
    </subcellularLocation>
    <subcellularLocation>
        <location evidence="1">Cytoplasm</location>
    </subcellularLocation>
</comment>
<comment type="similarity">
    <text evidence="2">Belongs to the CAF1 family.</text>
</comment>
<sequence>MKQISSGEVWRWNKEVEMNSIRDCLKHCSSIAIDTEFPGCLKETPMDASEEIRYRDMKFNVDNTHLIQLGFTLFDRRGFAKTWEINLSDFDEHKCFKNDKSIAFLKSNGLNLDKIREEGIGIDEFFRDFSQILTEKDGKITWVNFQGSYDNAYLVKGLTGGKPLPETKEEFHETVQQLLGKFVFDVKKIAESCSGLSSQFGLQRIADVLQMKRVGKAHHAGSDSELTARVFTKLTFDLLNSRKQSVRRVDHQQFQLEQQQHQQFMMTRCYIPIPMPIPRPRPVMFAAHHQNPYFGGGYFRMPVQGMNYVL</sequence>
<feature type="chain" id="PRO_0000371553" description="Putative CCR4-associated factor 1 homolog 3">
    <location>
        <begin position="1"/>
        <end position="310"/>
    </location>
</feature>
<feature type="binding site" evidence="1">
    <location>
        <position position="34"/>
    </location>
    <ligand>
        <name>a divalent metal cation</name>
        <dbReference type="ChEBI" id="CHEBI:60240"/>
        <note>catalytic</note>
    </ligand>
</feature>
<feature type="binding site" evidence="1">
    <location>
        <position position="36"/>
    </location>
    <ligand>
        <name>a divalent metal cation</name>
        <dbReference type="ChEBI" id="CHEBI:60240"/>
        <note>catalytic</note>
    </ligand>
</feature>
<feature type="binding site" evidence="1">
    <location>
        <position position="150"/>
    </location>
    <ligand>
        <name>a divalent metal cation</name>
        <dbReference type="ChEBI" id="CHEBI:60240"/>
        <note>catalytic</note>
    </ligand>
</feature>
<feature type="binding site" evidence="1">
    <location>
        <position position="223"/>
    </location>
    <ligand>
        <name>a divalent metal cation</name>
        <dbReference type="ChEBI" id="CHEBI:60240"/>
        <note>catalytic</note>
    </ligand>
</feature>